<reference key="1">
    <citation type="journal article" date="1987" name="J. Biol. Chem.">
        <title>Complete nucleotide sequence of cDNA and deduced amino acid sequence of rat liver arginase.</title>
        <authorList>
            <person name="Kawamoto S."/>
            <person name="Amaya Y."/>
            <person name="Murakami K."/>
            <person name="Tokunaga F."/>
            <person name="Iwanaga S."/>
            <person name="Kobayashi K."/>
            <person name="Saheki T."/>
            <person name="Kimura S."/>
            <person name="Mori M."/>
        </authorList>
    </citation>
    <scope>NUCLEOTIDE SEQUENCE [MRNA]</scope>
    <source>
        <tissue>Liver</tissue>
    </source>
</reference>
<reference key="2">
    <citation type="journal article" date="1988" name="J. Biol. Chem.">
        <title>Structural organization of the gene for rat liver-type arginase.</title>
        <authorList>
            <person name="Ohtake A."/>
            <person name="Takiguchi M."/>
            <person name="Shigeto Y."/>
            <person name="Amaya Y."/>
            <person name="Kawamoto S."/>
            <person name="Mori M."/>
        </authorList>
    </citation>
    <scope>NUCLEOTIDE SEQUENCE [GENOMIC DNA]</scope>
    <source>
        <tissue>Liver</tissue>
    </source>
</reference>
<reference key="3">
    <citation type="journal article" date="2004" name="Genome Res.">
        <title>The status, quality, and expansion of the NIH full-length cDNA project: the Mammalian Gene Collection (MGC).</title>
        <authorList>
            <consortium name="The MGC Project Team"/>
        </authorList>
    </citation>
    <scope>NUCLEOTIDE SEQUENCE [LARGE SCALE MRNA]</scope>
    <source>
        <tissue>Liver</tissue>
    </source>
</reference>
<reference key="4">
    <citation type="journal article" date="2002" name="Arch. Biochem. Biophys.">
        <title>Functional consequences of the G235R mutation in liver arginase leading to hyperargininemia.</title>
        <authorList>
            <person name="Lavulo L.T."/>
            <person name="Emig F.A."/>
            <person name="Ash D.E."/>
        </authorList>
    </citation>
    <scope>MUTAGENESIS OF GLY-235</scope>
</reference>
<reference key="5">
    <citation type="journal article" date="2012" name="Nat. Commun.">
        <title>Quantitative maps of protein phosphorylation sites across 14 different rat organs and tissues.</title>
        <authorList>
            <person name="Lundby A."/>
            <person name="Secher A."/>
            <person name="Lage K."/>
            <person name="Nordsborg N.B."/>
            <person name="Dmytriyev A."/>
            <person name="Lundby C."/>
            <person name="Olsen J.V."/>
        </authorList>
    </citation>
    <scope>PHOSPHORYLATION [LARGE SCALE ANALYSIS] AT SER-62 AND THR-281</scope>
    <scope>IDENTIFICATION BY MASS SPECTROMETRY [LARGE SCALE ANALYSIS]</scope>
</reference>
<reference key="6">
    <citation type="journal article" date="1996" name="Nature">
        <title>Structure of a unique binuclear manganese cluster in arginase.</title>
        <authorList>
            <person name="Kanyo Z.F."/>
            <person name="Scolnick L.R."/>
            <person name="Ash D.E."/>
            <person name="Christianson D.W."/>
        </authorList>
    </citation>
    <scope>X-RAY CRYSTALLOGRAPHY (2.10 ANGSTROMS) IN COMPLEX WITH MANGANESE</scope>
</reference>
<reference key="7">
    <citation type="journal article" date="1997" name="Biochemistry">
        <title>Altering the binuclear manganese cluster of arginase diminishes thermostability and catalytic function.</title>
        <authorList>
            <person name="Scolnick L.R."/>
            <person name="Kanyo Z.F."/>
            <person name="Cavalli R.C."/>
            <person name="Ash D.E."/>
            <person name="Christianson D.W."/>
        </authorList>
    </citation>
    <scope>X-RAY CRYSTALLOGRAPHY (2.54 ANGSTROMS) IN COMPLEX WITH MANGANESE</scope>
</reference>
<reference key="8">
    <citation type="journal article" date="1999" name="Nat. Struct. Biol.">
        <title>Arginase-boronic acid complex highlights a physiological role in erectile function.</title>
        <authorList>
            <person name="Cox J.D."/>
            <person name="Kim N.N."/>
            <person name="Traish A.M."/>
            <person name="Christianson D.W."/>
        </authorList>
    </citation>
    <scope>X-RAY CRYSTALLOGRAPHY (1.70 ANGSTROMS) IN COMPLEX WITH MANGANESE</scope>
    <scope>CATALYTIC ACTIVITY</scope>
</reference>
<reference key="9">
    <citation type="journal article" date="2003" name="Biochemistry">
        <title>Structural and functional importance of first-shell metal ligands in the binuclear manganese cluster of arginase I.</title>
        <authorList>
            <person name="Cama E."/>
            <person name="Emig F.A."/>
            <person name="Ash D.E."/>
            <person name="Christianson D.W."/>
        </authorList>
    </citation>
    <scope>X-RAY CRYSTALLOGRAPHY (2.5 ANGSTROMS) OF 6-319 OF MUTANTS ASN-101; GLU-101; ASN-128; GLU-128; ALA-232; CYS-232 AND GLU-234 IN COMPLEXES WITH MANGANESE IONS</scope>
    <scope>COFACTOR</scope>
    <scope>BIOPHYSICOCHEMICAL PROPERTIES</scope>
    <scope>MUTAGENESIS OF HIS-101; ASP-128; ASP-232 AND ASP-234</scope>
    <scope>CATALYTIC ACTIVITY</scope>
</reference>
<reference key="10">
    <citation type="journal article" date="2004" name="J. Am. Chem. Soc.">
        <title>Design of amino acid aldehydes as transition-state analogue inhibitors of arginase.</title>
        <authorList>
            <person name="Shin H."/>
            <person name="Cama E."/>
            <person name="Christianson D.W."/>
        </authorList>
    </citation>
    <scope>X-RAY CRYSTALLOGRAPHY (2.2 ANGSTROMS) OF 6-319 IN COMPLEX WITH MANGANESE IONS AND THE SYNTHETIC INHIBITOR (S)-2-AMINO-7-OXOHEPTANOIC ACID</scope>
</reference>
<reference key="11">
    <citation type="journal article" date="2005" name="Arch. Biochem. Biophys.">
        <title>Probing the role of the hyper-reactive histidine residue of arginase.</title>
        <authorList>
            <person name="Colleluori D.M."/>
            <person name="Reczkowski R.S."/>
            <person name="Emig F.A."/>
            <person name="Cama E."/>
            <person name="Cox J.D."/>
            <person name="Scolnick L.R."/>
            <person name="Compher K."/>
            <person name="Jude K."/>
            <person name="Han S."/>
            <person name="Viola R.E."/>
            <person name="Christianson D.W."/>
            <person name="Ash D.E."/>
        </authorList>
    </citation>
    <scope>X-RAY CRYSTALLOGRAPHY (1.7 ANGSTROMS) OF 6-319 OF MUTANTS ALA-141; ASN-141; ASP-141 AND CYS-141 IN COMPLEX WITH MANGANESE IONS</scope>
    <scope>COFACTOR</scope>
    <scope>MUTAGENESIS OF HIS-141</scope>
    <scope>BIOPHYSICOCHEMICAL PROPERTIES</scope>
    <scope>TISSUE SPECIFICITY</scope>
    <scope>CATALYTIC ACTIVITY</scope>
</reference>
<keyword id="KW-0002">3D-structure</keyword>
<keyword id="KW-1064">Adaptive immunity</keyword>
<keyword id="KW-0056">Arginine metabolism</keyword>
<keyword id="KW-0963">Cytoplasm</keyword>
<keyword id="KW-0378">Hydrolase</keyword>
<keyword id="KW-0391">Immunity</keyword>
<keyword id="KW-0399">Innate immunity</keyword>
<keyword id="KW-0464">Manganese</keyword>
<keyword id="KW-0479">Metal-binding</keyword>
<keyword id="KW-0597">Phosphoprotein</keyword>
<keyword id="KW-1185">Reference proteome</keyword>
<keyword id="KW-0835">Urea cycle</keyword>
<comment type="function">
    <text evidence="14">Key element of the urea cycle converting L-arginine to urea and L-ornithine, which is further metabolized into metabolites proline and polyamides that drive collagen synthesis and bioenergetic pathways critical for cell proliferation, respectively; the urea cycle takes place primarily in the liver and, to a lesser extent, in the kidneys.</text>
</comment>
<comment type="function">
    <text evidence="1 4">Functions in L-arginine homeostasis in nonhepatic tissues characterized by the competition between nitric oxide synthase (NOS) and arginase for the available intracellular substrate arginine. Arginine metabolism is a critical regulator of innate and adaptive immune responses. Involved in an antimicrobial effector pathway in polymorphonuclear granulocytes (PMN). Upon PMN cell death is liberated from the phagolysosome and depletes arginine in the microenvironment leading to suppressed T cell and natural killer (NK) cell proliferation and cytokine secretion (By similarity). In group 2 innate lymphoid cells (ILC2s) promotes acute type 2 inflammation in the lung and is involved in optimal ILC2 proliferation but not survival. Plays a role in the immune response of alternatively activated or M2 macrophages in processes such as wound healing and tissue regeneration, immune defense against multicellular pathogens and parasites, and immune suppression and allergic inflammation; the regulatory outcome seems to be organ specific. In tumor-infiltrating dendritic cells (DCs) and myeloid-derived suppressor cells (MDSCs) plays a role in suppression of T cell-mediated antitumor immunity.</text>
</comment>
<comment type="catalytic activity">
    <reaction evidence="9 11">
        <text>L-arginine + H2O = urea + L-ornithine</text>
        <dbReference type="Rhea" id="RHEA:20569"/>
        <dbReference type="ChEBI" id="CHEBI:15377"/>
        <dbReference type="ChEBI" id="CHEBI:16199"/>
        <dbReference type="ChEBI" id="CHEBI:32682"/>
        <dbReference type="ChEBI" id="CHEBI:46911"/>
        <dbReference type="EC" id="3.5.3.1"/>
    </reaction>
</comment>
<comment type="cofactor">
    <cofactor evidence="5 7 9 10 11 12 13">
        <name>Mn(2+)</name>
        <dbReference type="ChEBI" id="CHEBI:29035"/>
    </cofactor>
    <text evidence="5 7 9 10 11 12 13">Binds 2 manganese ions per subunit.</text>
</comment>
<comment type="activity regulation">
    <text>Inactivated by diethyl pyrocarbonate (DEPC).</text>
</comment>
<comment type="biophysicochemical properties">
    <kinetics>
        <KM evidence="9 11">1.4 mM for arginine</KM>
    </kinetics>
</comment>
<comment type="pathway">
    <text evidence="1">Nitrogen metabolism; urea cycle; L-ornithine and urea from L-arginine: step 1/1.</text>
</comment>
<comment type="subunit">
    <text evidence="1 10 11">Homotrimer (PubMed:15315440, PubMed:16266687). Interacts with CMTM6 (By similarity).</text>
</comment>
<comment type="subcellular location">
    <subcellularLocation>
        <location evidence="1">Cytoplasm</location>
    </subcellularLocation>
    <subcellularLocation>
        <location evidence="1">Cytoplasmic granule</location>
    </subcellularLocation>
</comment>
<comment type="tissue specificity">
    <text evidence="11">Detected in liver (at protein level).</text>
</comment>
<comment type="induction">
    <text>By arginine or homoarginine.</text>
</comment>
<comment type="similarity">
    <text evidence="5">Belongs to the arginase family.</text>
</comment>
<proteinExistence type="evidence at protein level"/>
<accession>P07824</accession>
<accession>Q5BK93</accession>
<sequence length="323" mass="34973">MSSKPKPIEIIGAPFSKGQPRGGVEKGPAALRKAGLVEKLKETEYNVRDHGDLAFVDVPNDSPFQIVKNPRSVGKANEQLAAVVAETQKNGTISVVLGGDHSMAIGSISGHARVHPDLCVIWVDAHTDINTPLTTSSGNLHGQPVAFLLKELKGKFPDVPGFSWVTPCISAKDIVYIGLRDVDPGEHYIIKTLGIKYFSMTEVDKLGIGKVMEETFSYLLGRKKRPIHLSFDVDGLDPVFTPATGTPVVGGLSYREGLYITEEIYKTGLLSGLDIMEVNPTLGKTPEEVTRTVNTAVALTLSCFGTKREGNHKPETDYLKPPK</sequence>
<evidence type="ECO:0000250" key="1">
    <source>
        <dbReference type="UniProtKB" id="P05089"/>
    </source>
</evidence>
<evidence type="ECO:0000250" key="2">
    <source>
        <dbReference type="UniProtKB" id="P53608"/>
    </source>
</evidence>
<evidence type="ECO:0000250" key="3">
    <source>
        <dbReference type="UniProtKB" id="P78540"/>
    </source>
</evidence>
<evidence type="ECO:0000250" key="4">
    <source>
        <dbReference type="UniProtKB" id="Q61176"/>
    </source>
</evidence>
<evidence type="ECO:0000255" key="5">
    <source>
        <dbReference type="PROSITE-ProRule" id="PRU00742"/>
    </source>
</evidence>
<evidence type="ECO:0000256" key="6">
    <source>
        <dbReference type="SAM" id="MobiDB-lite"/>
    </source>
</evidence>
<evidence type="ECO:0000269" key="7">
    <source>
    </source>
</evidence>
<evidence type="ECO:0000269" key="8">
    <source>
    </source>
</evidence>
<evidence type="ECO:0000269" key="9">
    <source>
    </source>
</evidence>
<evidence type="ECO:0000269" key="10">
    <source>
    </source>
</evidence>
<evidence type="ECO:0000269" key="11">
    <source>
    </source>
</evidence>
<evidence type="ECO:0000269" key="12">
    <source>
    </source>
</evidence>
<evidence type="ECO:0000269" key="13">
    <source>
    </source>
</evidence>
<evidence type="ECO:0000305" key="14"/>
<evidence type="ECO:0007744" key="15">
    <source>
        <dbReference type="PDB" id="1D3V"/>
    </source>
</evidence>
<evidence type="ECO:0007744" key="16">
    <source>
        <dbReference type="PDB" id="1HQ5"/>
    </source>
</evidence>
<evidence type="ECO:0007744" key="17">
    <source>
        <dbReference type="PDB" id="1HQF"/>
    </source>
</evidence>
<evidence type="ECO:0007744" key="18">
    <source>
        <dbReference type="PDB" id="1HQG"/>
    </source>
</evidence>
<evidence type="ECO:0007744" key="19">
    <source>
        <dbReference type="PDB" id="1HQH"/>
    </source>
</evidence>
<evidence type="ECO:0007744" key="20">
    <source>
        <dbReference type="PDB" id="1HQX"/>
    </source>
</evidence>
<evidence type="ECO:0007744" key="21">
    <source>
        <dbReference type="PDB" id="1P8M"/>
    </source>
</evidence>
<evidence type="ECO:0007744" key="22">
    <source>
        <dbReference type="PDB" id="1P8N"/>
    </source>
</evidence>
<evidence type="ECO:0007744" key="23">
    <source>
        <dbReference type="PDB" id="1P8O"/>
    </source>
</evidence>
<evidence type="ECO:0007744" key="24">
    <source>
        <dbReference type="PDB" id="1P8P"/>
    </source>
</evidence>
<evidence type="ECO:0007744" key="25">
    <source>
        <dbReference type="PDB" id="1P8Q"/>
    </source>
</evidence>
<evidence type="ECO:0007744" key="26">
    <source>
        <dbReference type="PDB" id="1P8R"/>
    </source>
</evidence>
<evidence type="ECO:0007744" key="27">
    <source>
        <dbReference type="PDB" id="1P8S"/>
    </source>
</evidence>
<evidence type="ECO:0007744" key="28">
    <source>
        <dbReference type="PDB" id="1R1O"/>
    </source>
</evidence>
<evidence type="ECO:0007744" key="29">
    <source>
        <dbReference type="PDB" id="1RLA"/>
    </source>
</evidence>
<evidence type="ECO:0007744" key="30">
    <source>
        <dbReference type="PDB" id="1T4P"/>
    </source>
</evidence>
<evidence type="ECO:0007744" key="31">
    <source>
        <dbReference type="PDB" id="1T4R"/>
    </source>
</evidence>
<evidence type="ECO:0007744" key="32">
    <source>
        <dbReference type="PDB" id="1T4S"/>
    </source>
</evidence>
<evidence type="ECO:0007744" key="33">
    <source>
        <dbReference type="PDB" id="1T4T"/>
    </source>
</evidence>
<evidence type="ECO:0007744" key="34">
    <source>
        <dbReference type="PDB" id="1T5F"/>
    </source>
</evidence>
<evidence type="ECO:0007744" key="35">
    <source>
        <dbReference type="PDB" id="1T5G"/>
    </source>
</evidence>
<evidence type="ECO:0007744" key="36">
    <source>
        <dbReference type="PDB" id="1TA1"/>
    </source>
</evidence>
<evidence type="ECO:0007744" key="37">
    <source>
        <dbReference type="PDB" id="1TBH"/>
    </source>
</evidence>
<evidence type="ECO:0007744" key="38">
    <source>
        <dbReference type="PDB" id="1TBJ"/>
    </source>
</evidence>
<evidence type="ECO:0007744" key="39">
    <source>
        <dbReference type="PDB" id="1TBL"/>
    </source>
</evidence>
<evidence type="ECO:0007744" key="40">
    <source>
        <dbReference type="PDB" id="1ZPE"/>
    </source>
</evidence>
<evidence type="ECO:0007744" key="41">
    <source>
        <dbReference type="PDB" id="1ZPG"/>
    </source>
</evidence>
<evidence type="ECO:0007744" key="42">
    <source>
        <dbReference type="PDB" id="2RLA"/>
    </source>
</evidence>
<evidence type="ECO:0007744" key="43">
    <source>
        <dbReference type="PDB" id="3E8Q"/>
    </source>
</evidence>
<evidence type="ECO:0007744" key="44">
    <source>
        <dbReference type="PDB" id="3E8Z"/>
    </source>
</evidence>
<evidence type="ECO:0007744" key="45">
    <source>
        <dbReference type="PDB" id="3E9B"/>
    </source>
</evidence>
<evidence type="ECO:0007744" key="46">
    <source>
        <dbReference type="PDB" id="3RLA"/>
    </source>
</evidence>
<evidence type="ECO:0007744" key="47">
    <source>
        <dbReference type="PDB" id="4RLA"/>
    </source>
</evidence>
<evidence type="ECO:0007744" key="48">
    <source>
        <dbReference type="PDB" id="5RLA"/>
    </source>
</evidence>
<evidence type="ECO:0007744" key="49">
    <source>
    </source>
</evidence>
<evidence type="ECO:0007829" key="50">
    <source>
        <dbReference type="PDB" id="1D3V"/>
    </source>
</evidence>
<evidence type="ECO:0007829" key="51">
    <source>
        <dbReference type="PDB" id="1HQH"/>
    </source>
</evidence>
<evidence type="ECO:0007829" key="52">
    <source>
        <dbReference type="PDB" id="1P8O"/>
    </source>
</evidence>
<evidence type="ECO:0007829" key="53">
    <source>
        <dbReference type="PDB" id="1P8R"/>
    </source>
</evidence>
<evidence type="ECO:0007829" key="54">
    <source>
        <dbReference type="PDB" id="1TBH"/>
    </source>
</evidence>
<evidence type="ECO:0007829" key="55">
    <source>
        <dbReference type="PDB" id="1ZPE"/>
    </source>
</evidence>
<evidence type="ECO:0007829" key="56">
    <source>
        <dbReference type="PDB" id="3E9B"/>
    </source>
</evidence>
<evidence type="ECO:0007829" key="57">
    <source>
        <dbReference type="PDB" id="5RLA"/>
    </source>
</evidence>
<dbReference type="EC" id="3.5.3.1" evidence="9 11"/>
<dbReference type="EMBL" id="J02720">
    <property type="protein sequence ID" value="AAA40761.1"/>
    <property type="molecule type" value="mRNA"/>
</dbReference>
<dbReference type="EMBL" id="M17931">
    <property type="protein sequence ID" value="AAA40760.1"/>
    <property type="molecule type" value="Genomic_DNA"/>
</dbReference>
<dbReference type="EMBL" id="M17924">
    <property type="protein sequence ID" value="AAA40760.1"/>
    <property type="status" value="JOINED"/>
    <property type="molecule type" value="Genomic_DNA"/>
</dbReference>
<dbReference type="EMBL" id="M17925">
    <property type="protein sequence ID" value="AAA40760.1"/>
    <property type="status" value="JOINED"/>
    <property type="molecule type" value="Genomic_DNA"/>
</dbReference>
<dbReference type="EMBL" id="M17926">
    <property type="protein sequence ID" value="AAA40760.1"/>
    <property type="status" value="JOINED"/>
    <property type="molecule type" value="Genomic_DNA"/>
</dbReference>
<dbReference type="EMBL" id="M17927">
    <property type="protein sequence ID" value="AAA40760.1"/>
    <property type="status" value="JOINED"/>
    <property type="molecule type" value="Genomic_DNA"/>
</dbReference>
<dbReference type="EMBL" id="M17928">
    <property type="protein sequence ID" value="AAA40760.1"/>
    <property type="status" value="JOINED"/>
    <property type="molecule type" value="Genomic_DNA"/>
</dbReference>
<dbReference type="EMBL" id="M17929">
    <property type="protein sequence ID" value="AAA40760.1"/>
    <property type="status" value="JOINED"/>
    <property type="molecule type" value="Genomic_DNA"/>
</dbReference>
<dbReference type="EMBL" id="M17930">
    <property type="protein sequence ID" value="AAA40760.1"/>
    <property type="status" value="JOINED"/>
    <property type="molecule type" value="Genomic_DNA"/>
</dbReference>
<dbReference type="EMBL" id="BC091158">
    <property type="protein sequence ID" value="AAH91158.1"/>
    <property type="molecule type" value="mRNA"/>
</dbReference>
<dbReference type="PIR" id="A26702">
    <property type="entry name" value="A26702"/>
</dbReference>
<dbReference type="RefSeq" id="NP_058830.2">
    <property type="nucleotide sequence ID" value="NM_017134.3"/>
</dbReference>
<dbReference type="PDB" id="1D3V">
    <property type="method" value="X-ray"/>
    <property type="resolution" value="1.70 A"/>
    <property type="chains" value="A/B=1-323"/>
</dbReference>
<dbReference type="PDB" id="1HQ5">
    <property type="method" value="X-ray"/>
    <property type="resolution" value="2.30 A"/>
    <property type="chains" value="A/B=1-323"/>
</dbReference>
<dbReference type="PDB" id="1HQF">
    <property type="method" value="X-ray"/>
    <property type="resolution" value="2.90 A"/>
    <property type="chains" value="A/B/C=1-323"/>
</dbReference>
<dbReference type="PDB" id="1HQG">
    <property type="method" value="X-ray"/>
    <property type="resolution" value="2.00 A"/>
    <property type="chains" value="A/B/C=1-323"/>
</dbReference>
<dbReference type="PDB" id="1HQH">
    <property type="method" value="X-ray"/>
    <property type="resolution" value="2.80 A"/>
    <property type="chains" value="A/B/C=1-323"/>
</dbReference>
<dbReference type="PDB" id="1HQX">
    <property type="method" value="X-ray"/>
    <property type="resolution" value="3.00 A"/>
    <property type="chains" value="A/B/C=1-323"/>
</dbReference>
<dbReference type="PDB" id="1P8M">
    <property type="method" value="X-ray"/>
    <property type="resolution" value="2.84 A"/>
    <property type="chains" value="A/B/C=6-319"/>
</dbReference>
<dbReference type="PDB" id="1P8N">
    <property type="method" value="X-ray"/>
    <property type="resolution" value="2.90 A"/>
    <property type="chains" value="A/B/C=6-319"/>
</dbReference>
<dbReference type="PDB" id="1P8O">
    <property type="method" value="X-ray"/>
    <property type="resolution" value="2.96 A"/>
    <property type="chains" value="A/B/C=6-319"/>
</dbReference>
<dbReference type="PDB" id="1P8P">
    <property type="method" value="X-ray"/>
    <property type="resolution" value="2.50 A"/>
    <property type="chains" value="A/B/C=6-319"/>
</dbReference>
<dbReference type="PDB" id="1P8Q">
    <property type="method" value="X-ray"/>
    <property type="resolution" value="2.95 A"/>
    <property type="chains" value="A/B/C=6-319"/>
</dbReference>
<dbReference type="PDB" id="1P8R">
    <property type="method" value="X-ray"/>
    <property type="resolution" value="2.50 A"/>
    <property type="chains" value="A/B=6-313"/>
</dbReference>
<dbReference type="PDB" id="1P8S">
    <property type="method" value="X-ray"/>
    <property type="resolution" value="3.20 A"/>
    <property type="chains" value="A/B/C=6-319"/>
</dbReference>
<dbReference type="PDB" id="1R1O">
    <property type="method" value="X-ray"/>
    <property type="resolution" value="2.80 A"/>
    <property type="chains" value="A/B/C=1-323"/>
</dbReference>
<dbReference type="PDB" id="1RLA">
    <property type="method" value="X-ray"/>
    <property type="resolution" value="2.10 A"/>
    <property type="chains" value="A/B/C=1-323"/>
</dbReference>
<dbReference type="PDB" id="1T4P">
    <property type="method" value="X-ray"/>
    <property type="resolution" value="2.60 A"/>
    <property type="chains" value="A/B/C=6-319"/>
</dbReference>
<dbReference type="PDB" id="1T4R">
    <property type="method" value="X-ray"/>
    <property type="resolution" value="2.60 A"/>
    <property type="chains" value="A/B/C=6-319"/>
</dbReference>
<dbReference type="PDB" id="1T4S">
    <property type="method" value="X-ray"/>
    <property type="resolution" value="2.80 A"/>
    <property type="chains" value="A/B/C=6-319"/>
</dbReference>
<dbReference type="PDB" id="1T4T">
    <property type="method" value="X-ray"/>
    <property type="resolution" value="2.20 A"/>
    <property type="chains" value="A/B/C=6-319"/>
</dbReference>
<dbReference type="PDB" id="1T5F">
    <property type="method" value="X-ray"/>
    <property type="resolution" value="2.20 A"/>
    <property type="chains" value="A/B/C=6-319"/>
</dbReference>
<dbReference type="PDB" id="1T5G">
    <property type="method" value="X-ray"/>
    <property type="resolution" value="2.40 A"/>
    <property type="chains" value="A/B/C=6-319"/>
</dbReference>
<dbReference type="PDB" id="1TA1">
    <property type="method" value="X-ray"/>
    <property type="resolution" value="2.50 A"/>
    <property type="chains" value="A/B/C=6-319"/>
</dbReference>
<dbReference type="PDB" id="1TBH">
    <property type="method" value="X-ray"/>
    <property type="resolution" value="2.70 A"/>
    <property type="chains" value="A/B/C=6-319"/>
</dbReference>
<dbReference type="PDB" id="1TBJ">
    <property type="method" value="X-ray"/>
    <property type="resolution" value="2.80 A"/>
    <property type="chains" value="A/B/C=6-319"/>
</dbReference>
<dbReference type="PDB" id="1TBL">
    <property type="method" value="X-ray"/>
    <property type="resolution" value="3.10 A"/>
    <property type="chains" value="A/B/C=6-319"/>
</dbReference>
<dbReference type="PDB" id="1ZPE">
    <property type="method" value="X-ray"/>
    <property type="resolution" value="1.70 A"/>
    <property type="chains" value="A/B/C=6-319"/>
</dbReference>
<dbReference type="PDB" id="1ZPG">
    <property type="method" value="X-ray"/>
    <property type="resolution" value="1.90 A"/>
    <property type="chains" value="A/B/C=6-319"/>
</dbReference>
<dbReference type="PDB" id="2RLA">
    <property type="method" value="X-ray"/>
    <property type="resolution" value="3.00 A"/>
    <property type="chains" value="A/B/C=1-323"/>
</dbReference>
<dbReference type="PDB" id="3E8Q">
    <property type="method" value="X-ray"/>
    <property type="resolution" value="2.90 A"/>
    <property type="chains" value="A/B/C=1-323"/>
</dbReference>
<dbReference type="PDB" id="3E8Z">
    <property type="method" value="X-ray"/>
    <property type="resolution" value="2.00 A"/>
    <property type="chains" value="A/B/C=1-323"/>
</dbReference>
<dbReference type="PDB" id="3E9B">
    <property type="method" value="X-ray"/>
    <property type="resolution" value="2.15 A"/>
    <property type="chains" value="A/B/C=1-323"/>
</dbReference>
<dbReference type="PDB" id="3RLA">
    <property type="method" value="X-ray"/>
    <property type="resolution" value="2.54 A"/>
    <property type="chains" value="A/B/C=1-323"/>
</dbReference>
<dbReference type="PDB" id="4RLA">
    <property type="method" value="X-ray"/>
    <property type="resolution" value="2.94 A"/>
    <property type="chains" value="A/B/C=1-323"/>
</dbReference>
<dbReference type="PDB" id="5RLA">
    <property type="method" value="X-ray"/>
    <property type="resolution" value="2.74 A"/>
    <property type="chains" value="A/B/C=1-323"/>
</dbReference>
<dbReference type="PDBsum" id="1D3V"/>
<dbReference type="PDBsum" id="1HQ5"/>
<dbReference type="PDBsum" id="1HQF"/>
<dbReference type="PDBsum" id="1HQG"/>
<dbReference type="PDBsum" id="1HQH"/>
<dbReference type="PDBsum" id="1HQX"/>
<dbReference type="PDBsum" id="1P8M"/>
<dbReference type="PDBsum" id="1P8N"/>
<dbReference type="PDBsum" id="1P8O"/>
<dbReference type="PDBsum" id="1P8P"/>
<dbReference type="PDBsum" id="1P8Q"/>
<dbReference type="PDBsum" id="1P8R"/>
<dbReference type="PDBsum" id="1P8S"/>
<dbReference type="PDBsum" id="1R1O"/>
<dbReference type="PDBsum" id="1RLA"/>
<dbReference type="PDBsum" id="1T4P"/>
<dbReference type="PDBsum" id="1T4R"/>
<dbReference type="PDBsum" id="1T4S"/>
<dbReference type="PDBsum" id="1T4T"/>
<dbReference type="PDBsum" id="1T5F"/>
<dbReference type="PDBsum" id="1T5G"/>
<dbReference type="PDBsum" id="1TA1"/>
<dbReference type="PDBsum" id="1TBH"/>
<dbReference type="PDBsum" id="1TBJ"/>
<dbReference type="PDBsum" id="1TBL"/>
<dbReference type="PDBsum" id="1ZPE"/>
<dbReference type="PDBsum" id="1ZPG"/>
<dbReference type="PDBsum" id="2RLA"/>
<dbReference type="PDBsum" id="3E8Q"/>
<dbReference type="PDBsum" id="3E8Z"/>
<dbReference type="PDBsum" id="3E9B"/>
<dbReference type="PDBsum" id="3RLA"/>
<dbReference type="PDBsum" id="4RLA"/>
<dbReference type="PDBsum" id="5RLA"/>
<dbReference type="SMR" id="P07824"/>
<dbReference type="BioGRID" id="247899">
    <property type="interactions" value="3"/>
</dbReference>
<dbReference type="FunCoup" id="P07824">
    <property type="interactions" value="100"/>
</dbReference>
<dbReference type="IntAct" id="P07824">
    <property type="interactions" value="1"/>
</dbReference>
<dbReference type="STRING" id="10116.ENSRNOP00000017911"/>
<dbReference type="BindingDB" id="P07824"/>
<dbReference type="ChEMBL" id="CHEMBL3232699"/>
<dbReference type="CarbonylDB" id="P07824"/>
<dbReference type="GlyGen" id="P07824">
    <property type="glycosylation" value="2 sites"/>
</dbReference>
<dbReference type="iPTMnet" id="P07824"/>
<dbReference type="PhosphoSitePlus" id="P07824"/>
<dbReference type="PaxDb" id="10116-ENSRNOP00000017911"/>
<dbReference type="GeneID" id="29221"/>
<dbReference type="KEGG" id="rno:29221"/>
<dbReference type="AGR" id="RGD:2150"/>
<dbReference type="CTD" id="383"/>
<dbReference type="RGD" id="2150">
    <property type="gene designation" value="Arg1"/>
</dbReference>
<dbReference type="VEuPathDB" id="HostDB:ENSRNOG00000013304"/>
<dbReference type="eggNOG" id="KOG2965">
    <property type="taxonomic scope" value="Eukaryota"/>
</dbReference>
<dbReference type="HOGENOM" id="CLU_039478_6_1_1"/>
<dbReference type="InParanoid" id="P07824"/>
<dbReference type="PhylomeDB" id="P07824"/>
<dbReference type="TreeFam" id="TF300034"/>
<dbReference type="BRENDA" id="3.5.3.1">
    <property type="organism ID" value="5301"/>
</dbReference>
<dbReference type="Reactome" id="R-RNO-6798695">
    <property type="pathway name" value="Neutrophil degranulation"/>
</dbReference>
<dbReference type="Reactome" id="R-RNO-70635">
    <property type="pathway name" value="Urea cycle"/>
</dbReference>
<dbReference type="SABIO-RK" id="P07824"/>
<dbReference type="UniPathway" id="UPA00158">
    <property type="reaction ID" value="UER00270"/>
</dbReference>
<dbReference type="EvolutionaryTrace" id="P07824"/>
<dbReference type="PRO" id="PR:P07824"/>
<dbReference type="Proteomes" id="UP000002494">
    <property type="component" value="Chromosome 1"/>
</dbReference>
<dbReference type="Bgee" id="ENSRNOG00000013304">
    <property type="expression patterns" value="Expressed in liver and 19 other cell types or tissues"/>
</dbReference>
<dbReference type="GO" id="GO:0005737">
    <property type="term" value="C:cytoplasm"/>
    <property type="evidence" value="ECO:0000318"/>
    <property type="project" value="GO_Central"/>
</dbReference>
<dbReference type="GO" id="GO:0005829">
    <property type="term" value="C:cytosol"/>
    <property type="evidence" value="ECO:0000318"/>
    <property type="project" value="GO_Central"/>
</dbReference>
<dbReference type="GO" id="GO:0005615">
    <property type="term" value="C:extracellular space"/>
    <property type="evidence" value="ECO:0000314"/>
    <property type="project" value="RGD"/>
</dbReference>
<dbReference type="GO" id="GO:0005741">
    <property type="term" value="C:mitochondrial outer membrane"/>
    <property type="evidence" value="ECO:0000314"/>
    <property type="project" value="RGD"/>
</dbReference>
<dbReference type="GO" id="GO:0043025">
    <property type="term" value="C:neuronal cell body"/>
    <property type="evidence" value="ECO:0000314"/>
    <property type="project" value="RGD"/>
</dbReference>
<dbReference type="GO" id="GO:0004053">
    <property type="term" value="F:arginase activity"/>
    <property type="evidence" value="ECO:0000314"/>
    <property type="project" value="RGD"/>
</dbReference>
<dbReference type="GO" id="GO:0042802">
    <property type="term" value="F:identical protein binding"/>
    <property type="evidence" value="ECO:0000353"/>
    <property type="project" value="RGD"/>
</dbReference>
<dbReference type="GO" id="GO:0030145">
    <property type="term" value="F:manganese ion binding"/>
    <property type="evidence" value="ECO:0000314"/>
    <property type="project" value="RGD"/>
</dbReference>
<dbReference type="GO" id="GO:0002250">
    <property type="term" value="P:adaptive immune response"/>
    <property type="evidence" value="ECO:0007669"/>
    <property type="project" value="UniProtKB-KW"/>
</dbReference>
<dbReference type="GO" id="GO:0019547">
    <property type="term" value="P:arginine catabolic process to ornithine"/>
    <property type="evidence" value="ECO:0000314"/>
    <property type="project" value="RGD"/>
</dbReference>
<dbReference type="GO" id="GO:0006525">
    <property type="term" value="P:arginine metabolic process"/>
    <property type="evidence" value="ECO:0000314"/>
    <property type="project" value="RGD"/>
</dbReference>
<dbReference type="GO" id="GO:0071549">
    <property type="term" value="P:cellular response to dexamethasone stimulus"/>
    <property type="evidence" value="ECO:0000270"/>
    <property type="project" value="RGD"/>
</dbReference>
<dbReference type="GO" id="GO:0071377">
    <property type="term" value="P:cellular response to glucagon stimulus"/>
    <property type="evidence" value="ECO:0000270"/>
    <property type="project" value="RGD"/>
</dbReference>
<dbReference type="GO" id="GO:0070301">
    <property type="term" value="P:cellular response to hydrogen peroxide"/>
    <property type="evidence" value="ECO:0000270"/>
    <property type="project" value="RGD"/>
</dbReference>
<dbReference type="GO" id="GO:0071353">
    <property type="term" value="P:cellular response to interleukin-4"/>
    <property type="evidence" value="ECO:0000270"/>
    <property type="project" value="RGD"/>
</dbReference>
<dbReference type="GO" id="GO:0071222">
    <property type="term" value="P:cellular response to lipopolysaccharide"/>
    <property type="evidence" value="ECO:0000270"/>
    <property type="project" value="RGD"/>
</dbReference>
<dbReference type="GO" id="GO:0071560">
    <property type="term" value="P:cellular response to transforming growth factor beta stimulus"/>
    <property type="evidence" value="ECO:0000270"/>
    <property type="project" value="RGD"/>
</dbReference>
<dbReference type="GO" id="GO:0032964">
    <property type="term" value="P:collagen biosynthetic process"/>
    <property type="evidence" value="ECO:0000315"/>
    <property type="project" value="RGD"/>
</dbReference>
<dbReference type="GO" id="GO:0042832">
    <property type="term" value="P:defense response to protozoan"/>
    <property type="evidence" value="ECO:0000266"/>
    <property type="project" value="RGD"/>
</dbReference>
<dbReference type="GO" id="GO:0007565">
    <property type="term" value="P:female pregnancy"/>
    <property type="evidence" value="ECO:0000270"/>
    <property type="project" value="RGD"/>
</dbReference>
<dbReference type="GO" id="GO:0045087">
    <property type="term" value="P:innate immune response"/>
    <property type="evidence" value="ECO:0007669"/>
    <property type="project" value="UniProtKB-KW"/>
</dbReference>
<dbReference type="GO" id="GO:0001889">
    <property type="term" value="P:liver development"/>
    <property type="evidence" value="ECO:0000270"/>
    <property type="project" value="RGD"/>
</dbReference>
<dbReference type="GO" id="GO:0030324">
    <property type="term" value="P:lung development"/>
    <property type="evidence" value="ECO:0000270"/>
    <property type="project" value="RGD"/>
</dbReference>
<dbReference type="GO" id="GO:0060056">
    <property type="term" value="P:mammary gland involution"/>
    <property type="evidence" value="ECO:0000270"/>
    <property type="project" value="RGD"/>
</dbReference>
<dbReference type="GO" id="GO:0060135">
    <property type="term" value="P:maternal process involved in female pregnancy"/>
    <property type="evidence" value="ECO:0000270"/>
    <property type="project" value="RGD"/>
</dbReference>
<dbReference type="GO" id="GO:0046007">
    <property type="term" value="P:negative regulation of activated T cell proliferation"/>
    <property type="evidence" value="ECO:0000266"/>
    <property type="project" value="RGD"/>
</dbReference>
<dbReference type="GO" id="GO:0042130">
    <property type="term" value="P:negative regulation of T cell proliferation"/>
    <property type="evidence" value="ECO:0000266"/>
    <property type="project" value="RGD"/>
</dbReference>
<dbReference type="GO" id="GO:2000552">
    <property type="term" value="P:negative regulation of T-helper 2 cell cytokine production"/>
    <property type="evidence" value="ECO:0000266"/>
    <property type="project" value="RGD"/>
</dbReference>
<dbReference type="GO" id="GO:0060336">
    <property type="term" value="P:negative regulation of type II interferon-mediated signaling pathway"/>
    <property type="evidence" value="ECO:0000266"/>
    <property type="project" value="RGD"/>
</dbReference>
<dbReference type="GO" id="GO:0001938">
    <property type="term" value="P:positive regulation of endothelial cell proliferation"/>
    <property type="evidence" value="ECO:0000314"/>
    <property type="project" value="RGD"/>
</dbReference>
<dbReference type="GO" id="GO:0070965">
    <property type="term" value="P:positive regulation of neutrophil mediated killing of fungus"/>
    <property type="evidence" value="ECO:0000266"/>
    <property type="project" value="RGD"/>
</dbReference>
<dbReference type="GO" id="GO:1905541">
    <property type="term" value="P:regulation of L-arginine import across plasma membrane"/>
    <property type="evidence" value="ECO:0000314"/>
    <property type="project" value="RGD"/>
</dbReference>
<dbReference type="GO" id="GO:0014075">
    <property type="term" value="P:response to amine"/>
    <property type="evidence" value="ECO:0000270"/>
    <property type="project" value="RGD"/>
</dbReference>
<dbReference type="GO" id="GO:0043200">
    <property type="term" value="P:response to amino acid"/>
    <property type="evidence" value="ECO:0000270"/>
    <property type="project" value="RGD"/>
</dbReference>
<dbReference type="GO" id="GO:0048678">
    <property type="term" value="P:response to axon injury"/>
    <property type="evidence" value="ECO:0000270"/>
    <property type="project" value="RGD"/>
</dbReference>
<dbReference type="GO" id="GO:0046686">
    <property type="term" value="P:response to cadmium ion"/>
    <property type="evidence" value="ECO:0000270"/>
    <property type="project" value="RGD"/>
</dbReference>
<dbReference type="GO" id="GO:0009635">
    <property type="term" value="P:response to herbicide"/>
    <property type="evidence" value="ECO:0000270"/>
    <property type="project" value="RGD"/>
</dbReference>
<dbReference type="GO" id="GO:0032496">
    <property type="term" value="P:response to lipopolysaccharide"/>
    <property type="evidence" value="ECO:0000270"/>
    <property type="project" value="RGD"/>
</dbReference>
<dbReference type="GO" id="GO:0010042">
    <property type="term" value="P:response to manganese ion"/>
    <property type="evidence" value="ECO:0000270"/>
    <property type="project" value="RGD"/>
</dbReference>
<dbReference type="GO" id="GO:0051597">
    <property type="term" value="P:response to methylmercury"/>
    <property type="evidence" value="ECO:0000270"/>
    <property type="project" value="RGD"/>
</dbReference>
<dbReference type="GO" id="GO:0009624">
    <property type="term" value="P:response to nematode"/>
    <property type="evidence" value="ECO:0000266"/>
    <property type="project" value="RGD"/>
</dbReference>
<dbReference type="GO" id="GO:0043434">
    <property type="term" value="P:response to peptide hormone"/>
    <property type="evidence" value="ECO:0000270"/>
    <property type="project" value="RGD"/>
</dbReference>
<dbReference type="GO" id="GO:0010269">
    <property type="term" value="P:response to selenium ion"/>
    <property type="evidence" value="ECO:0000270"/>
    <property type="project" value="RGD"/>
</dbReference>
<dbReference type="GO" id="GO:0048545">
    <property type="term" value="P:response to steroid hormone"/>
    <property type="evidence" value="ECO:0000270"/>
    <property type="project" value="RGD"/>
</dbReference>
<dbReference type="GO" id="GO:0033189">
    <property type="term" value="P:response to vitamin A"/>
    <property type="evidence" value="ECO:0000270"/>
    <property type="project" value="RGD"/>
</dbReference>
<dbReference type="GO" id="GO:0033197">
    <property type="term" value="P:response to vitamin E"/>
    <property type="evidence" value="ECO:0000270"/>
    <property type="project" value="RGD"/>
</dbReference>
<dbReference type="GO" id="GO:0009410">
    <property type="term" value="P:response to xenobiotic stimulus"/>
    <property type="evidence" value="ECO:0000270"/>
    <property type="project" value="RGD"/>
</dbReference>
<dbReference type="GO" id="GO:0010043">
    <property type="term" value="P:response to zinc ion"/>
    <property type="evidence" value="ECO:0000270"/>
    <property type="project" value="RGD"/>
</dbReference>
<dbReference type="GO" id="GO:0000050">
    <property type="term" value="P:urea cycle"/>
    <property type="evidence" value="ECO:0000314"/>
    <property type="project" value="RGD"/>
</dbReference>
<dbReference type="CDD" id="cd11587">
    <property type="entry name" value="Arginase-like"/>
    <property type="match status" value="1"/>
</dbReference>
<dbReference type="FunFam" id="3.40.800.10:FF:000011">
    <property type="entry name" value="Arginase-1"/>
    <property type="match status" value="1"/>
</dbReference>
<dbReference type="Gene3D" id="3.40.800.10">
    <property type="entry name" value="Ureohydrolase domain"/>
    <property type="match status" value="1"/>
</dbReference>
<dbReference type="InterPro" id="IPR014033">
    <property type="entry name" value="Arginase"/>
</dbReference>
<dbReference type="InterPro" id="IPR006035">
    <property type="entry name" value="Ureohydrolase"/>
</dbReference>
<dbReference type="InterPro" id="IPR023696">
    <property type="entry name" value="Ureohydrolase_dom_sf"/>
</dbReference>
<dbReference type="InterPro" id="IPR020855">
    <property type="entry name" value="Ureohydrolase_Mn_BS"/>
</dbReference>
<dbReference type="NCBIfam" id="TIGR01229">
    <property type="entry name" value="rocF_arginase"/>
    <property type="match status" value="1"/>
</dbReference>
<dbReference type="PANTHER" id="PTHR43782">
    <property type="entry name" value="ARGINASE"/>
    <property type="match status" value="1"/>
</dbReference>
<dbReference type="PANTHER" id="PTHR43782:SF2">
    <property type="entry name" value="ARGINASE-1"/>
    <property type="match status" value="1"/>
</dbReference>
<dbReference type="Pfam" id="PF00491">
    <property type="entry name" value="Arginase"/>
    <property type="match status" value="1"/>
</dbReference>
<dbReference type="PIRSF" id="PIRSF036979">
    <property type="entry name" value="Arginase"/>
    <property type="match status" value="1"/>
</dbReference>
<dbReference type="PRINTS" id="PR00116">
    <property type="entry name" value="ARGINASE"/>
</dbReference>
<dbReference type="SUPFAM" id="SSF52768">
    <property type="entry name" value="Arginase/deacetylase"/>
    <property type="match status" value="1"/>
</dbReference>
<dbReference type="PROSITE" id="PS01053">
    <property type="entry name" value="ARGINASE_1"/>
    <property type="match status" value="1"/>
</dbReference>
<dbReference type="PROSITE" id="PS51409">
    <property type="entry name" value="ARGINASE_2"/>
    <property type="match status" value="1"/>
</dbReference>
<name>ARGI1_RAT</name>
<organism>
    <name type="scientific">Rattus norvegicus</name>
    <name type="common">Rat</name>
    <dbReference type="NCBI Taxonomy" id="10116"/>
    <lineage>
        <taxon>Eukaryota</taxon>
        <taxon>Metazoa</taxon>
        <taxon>Chordata</taxon>
        <taxon>Craniata</taxon>
        <taxon>Vertebrata</taxon>
        <taxon>Euteleostomi</taxon>
        <taxon>Mammalia</taxon>
        <taxon>Eutheria</taxon>
        <taxon>Euarchontoglires</taxon>
        <taxon>Glires</taxon>
        <taxon>Rodentia</taxon>
        <taxon>Myomorpha</taxon>
        <taxon>Muroidea</taxon>
        <taxon>Muridae</taxon>
        <taxon>Murinae</taxon>
        <taxon>Rattus</taxon>
    </lineage>
</organism>
<feature type="chain" id="PRO_0000173697" description="Arginase-1">
    <location>
        <begin position="1"/>
        <end position="323"/>
    </location>
</feature>
<feature type="region of interest" description="Disordered" evidence="6">
    <location>
        <begin position="1"/>
        <end position="27"/>
    </location>
</feature>
<feature type="binding site" evidence="7 9 10 11 12 15 16 17 18 19 20 21 22 23 25 27 28 29 30 31 32 33 34 35 36 37 38 39 40 41 43 44 45">
    <location>
        <position position="101"/>
    </location>
    <ligand>
        <name>Mn(2+)</name>
        <dbReference type="ChEBI" id="CHEBI:29035"/>
        <label>1</label>
    </ligand>
</feature>
<feature type="binding site" evidence="7 9 10 11 12 13 15 16 17 18 19 20 21 22 23 24 25 26 27 28 29 30 31 32 33 34 35 36 37 38 39 40 41 43 44 45 46">
    <location>
        <position position="124"/>
    </location>
    <ligand>
        <name>Mn(2+)</name>
        <dbReference type="ChEBI" id="CHEBI:29035"/>
        <label>1</label>
    </ligand>
</feature>
<feature type="binding site" evidence="7 9 10 11 12 13 15 16 17 18 19 20 21 23 24 25 26 27 28 29 30 31 32 33 34 35 36 37 38 39 40 41 42 43 44 45 46 47 48">
    <location>
        <position position="124"/>
    </location>
    <ligand>
        <name>Mn(2+)</name>
        <dbReference type="ChEBI" id="CHEBI:29035"/>
        <label>2</label>
    </ligand>
</feature>
<feature type="binding site" evidence="18 19 35">
    <location>
        <begin position="126"/>
        <end position="130"/>
    </location>
    <ligand>
        <name>substrate</name>
    </ligand>
</feature>
<feature type="binding site" evidence="7 9 10 11 12 13 15 16 17 18 19 20 21 23 24 25 26 27 28 29 30 31 32 33 34 35 36 37 38 39 40 41 42 43 44 45 46 47 48">
    <location>
        <position position="126"/>
    </location>
    <ligand>
        <name>Mn(2+)</name>
        <dbReference type="ChEBI" id="CHEBI:29035"/>
        <label>2</label>
    </ligand>
</feature>
<feature type="binding site" evidence="7 9 10 11 12 13 15 16 17 18 19 20 22 24 25 26 27 28 29 30 31 32 33 34 35 36 37 38 39 40 41 43 44 45 46">
    <location>
        <position position="128"/>
    </location>
    <ligand>
        <name>Mn(2+)</name>
        <dbReference type="ChEBI" id="CHEBI:29035"/>
        <label>1</label>
    </ligand>
</feature>
<feature type="binding site" evidence="18 19">
    <location>
        <begin position="137"/>
        <end position="139"/>
    </location>
    <ligand>
        <name>substrate</name>
    </ligand>
</feature>
<feature type="binding site" evidence="35">
    <location>
        <position position="183"/>
    </location>
    <ligand>
        <name>substrate</name>
    </ligand>
</feature>
<feature type="binding site" evidence="7 9 10 11 12 13 15 16 17 18 19 20 21 23 24 25 26 28 29 30 31 32 33 34 35 36 37 38 39 40 41 43 44 45 46">
    <location>
        <position position="232"/>
    </location>
    <ligand>
        <name>Mn(2+)</name>
        <dbReference type="ChEBI" id="CHEBI:29035"/>
        <label>1</label>
    </ligand>
</feature>
<feature type="binding site" evidence="7 9 10 11 12 13 15 16 17 18 19 20 21 23 24 25 26 28 29 30 31 32 33 34 35 36 37 38 39 40 41 42 43 44 45 46 47 48">
    <location>
        <position position="232"/>
    </location>
    <ligand>
        <name>Mn(2+)</name>
        <dbReference type="ChEBI" id="CHEBI:29035"/>
        <label>2</label>
    </ligand>
</feature>
<feature type="binding site" evidence="7 9 10 11 12 13 15 16 17 18 19 20 21 23 24 26 27 28 29 30 31 32 33 34 35 36 37 38 39 40 41 42 43 44 45 46 47 48">
    <location>
        <position position="234"/>
    </location>
    <ligand>
        <name>Mn(2+)</name>
        <dbReference type="ChEBI" id="CHEBI:29035"/>
        <label>2</label>
    </ligand>
</feature>
<feature type="binding site" evidence="2">
    <location>
        <position position="246"/>
    </location>
    <ligand>
        <name>substrate</name>
    </ligand>
</feature>
<feature type="binding site" evidence="3">
    <location>
        <position position="277"/>
    </location>
    <ligand>
        <name>substrate</name>
    </ligand>
</feature>
<feature type="modified residue" description="N6-succinyllysine" evidence="4">
    <location>
        <position position="17"/>
    </location>
</feature>
<feature type="modified residue" description="Phosphoserine" evidence="49">
    <location>
        <position position="62"/>
    </location>
</feature>
<feature type="modified residue" description="Phosphoserine" evidence="4">
    <location>
        <position position="72"/>
    </location>
</feature>
<feature type="modified residue" description="N6-succinyllysine" evidence="4">
    <location>
        <position position="75"/>
    </location>
</feature>
<feature type="modified residue" description="Phosphoserine" evidence="1">
    <location>
        <position position="163"/>
    </location>
</feature>
<feature type="modified residue" description="Phosphoserine" evidence="1">
    <location>
        <position position="217"/>
    </location>
</feature>
<feature type="modified residue" description="Phosphothreonine" evidence="49">
    <location>
        <position position="281"/>
    </location>
</feature>
<feature type="mutagenesis site" description="Reduced catalytic activity. No effect on manganese binding." evidence="9">
    <original>H</original>
    <variation>E</variation>
    <location>
        <position position="101"/>
    </location>
</feature>
<feature type="mutagenesis site" description="Reduced manganese binding and strongly reduced catalytic activity." evidence="9">
    <original>D</original>
    <variation>E</variation>
    <variation>N</variation>
    <location>
        <position position="128"/>
    </location>
</feature>
<feature type="mutagenesis site" description="Strongly reduced catalytic activity. Minor effect on affinity for arginine." evidence="11">
    <original>H</original>
    <variation>A</variation>
    <variation>C</variation>
    <variation>D</variation>
    <location>
        <position position="141"/>
    </location>
</feature>
<feature type="mutagenesis site" description="Reduced affinity for arginine and reduced catalytic activity." evidence="11">
    <original>H</original>
    <variation>N</variation>
    <location>
        <position position="141"/>
    </location>
</feature>
<feature type="mutagenesis site" description="Loss of one manganese ion and strongly reduced catalytic activity." evidence="9">
    <original>D</original>
    <variation>A</variation>
    <location>
        <position position="232"/>
    </location>
</feature>
<feature type="mutagenesis site" description="Reduced manganese binding and strongly reduced catalytic activity." evidence="9">
    <original>D</original>
    <variation>C</variation>
    <location>
        <position position="232"/>
    </location>
</feature>
<feature type="mutagenesis site" description="Reduced manganese binding and strongly reduced catalytic activity." evidence="9">
    <original>D</original>
    <variation>A</variation>
    <variation>E</variation>
    <variation>H</variation>
    <location>
        <position position="234"/>
    </location>
</feature>
<feature type="mutagenesis site" description="56% of wild-type activity." evidence="8">
    <original>G</original>
    <variation>A</variation>
    <location>
        <position position="235"/>
    </location>
</feature>
<feature type="mutagenesis site" description="Loss of manganese-binding and activity." evidence="8">
    <original>G</original>
    <variation>R</variation>
    <location>
        <position position="235"/>
    </location>
</feature>
<feature type="sequence conflict" description="In Ref. 1; AAA40761/AAA40760." evidence="14" ref="1">
    <original>A</original>
    <variation>P</variation>
    <location>
        <position position="298"/>
    </location>
</feature>
<feature type="strand" evidence="50">
    <location>
        <begin position="8"/>
        <end position="12"/>
    </location>
</feature>
<feature type="strand" evidence="55">
    <location>
        <begin position="19"/>
        <end position="21"/>
    </location>
</feature>
<feature type="helix" evidence="50">
    <location>
        <begin position="22"/>
        <end position="26"/>
    </location>
</feature>
<feature type="helix" evidence="50">
    <location>
        <begin position="27"/>
        <end position="33"/>
    </location>
</feature>
<feature type="helix" evidence="50">
    <location>
        <begin position="36"/>
        <end position="40"/>
    </location>
</feature>
<feature type="strand" evidence="50">
    <location>
        <begin position="43"/>
        <end position="45"/>
    </location>
</feature>
<feature type="strand" evidence="50">
    <location>
        <begin position="47"/>
        <end position="52"/>
    </location>
</feature>
<feature type="strand" evidence="57">
    <location>
        <begin position="64"/>
        <end position="66"/>
    </location>
</feature>
<feature type="strand" evidence="55">
    <location>
        <begin position="67"/>
        <end position="69"/>
    </location>
</feature>
<feature type="helix" evidence="50">
    <location>
        <begin position="70"/>
        <end position="89"/>
    </location>
</feature>
<feature type="strand" evidence="50">
    <location>
        <begin position="93"/>
        <end position="97"/>
    </location>
</feature>
<feature type="helix" evidence="50">
    <location>
        <begin position="101"/>
        <end position="103"/>
    </location>
</feature>
<feature type="helix" evidence="50">
    <location>
        <begin position="104"/>
        <end position="114"/>
    </location>
</feature>
<feature type="strand" evidence="50">
    <location>
        <begin position="119"/>
        <end position="126"/>
    </location>
</feature>
<feature type="turn" evidence="50">
    <location>
        <begin position="132"/>
        <end position="134"/>
    </location>
</feature>
<feature type="strand" evidence="54">
    <location>
        <begin position="136"/>
        <end position="138"/>
    </location>
</feature>
<feature type="helix" evidence="50">
    <location>
        <begin position="140"/>
        <end position="142"/>
    </location>
</feature>
<feature type="helix" evidence="50">
    <location>
        <begin position="144"/>
        <end position="148"/>
    </location>
</feature>
<feature type="helix" evidence="50">
    <location>
        <begin position="150"/>
        <end position="152"/>
    </location>
</feature>
<feature type="strand" evidence="52">
    <location>
        <begin position="153"/>
        <end position="156"/>
    </location>
</feature>
<feature type="turn" evidence="51">
    <location>
        <begin position="160"/>
        <end position="164"/>
    </location>
</feature>
<feature type="helix" evidence="50">
    <location>
        <begin position="171"/>
        <end position="173"/>
    </location>
</feature>
<feature type="strand" evidence="50">
    <location>
        <begin position="174"/>
        <end position="179"/>
    </location>
</feature>
<feature type="helix" evidence="50">
    <location>
        <begin position="184"/>
        <end position="193"/>
    </location>
</feature>
<feature type="strand" evidence="50">
    <location>
        <begin position="196"/>
        <end position="199"/>
    </location>
</feature>
<feature type="helix" evidence="50">
    <location>
        <begin position="200"/>
        <end position="206"/>
    </location>
</feature>
<feature type="helix" evidence="50">
    <location>
        <begin position="208"/>
        <end position="220"/>
    </location>
</feature>
<feature type="strand" evidence="56">
    <location>
        <begin position="221"/>
        <end position="223"/>
    </location>
</feature>
<feature type="strand" evidence="50">
    <location>
        <begin position="227"/>
        <end position="232"/>
    </location>
</feature>
<feature type="helix" evidence="50">
    <location>
        <begin position="233"/>
        <end position="235"/>
    </location>
</feature>
<feature type="turn" evidence="50">
    <location>
        <begin position="238"/>
        <end position="240"/>
    </location>
</feature>
<feature type="strand" evidence="50">
    <location>
        <begin position="244"/>
        <end position="246"/>
    </location>
</feature>
<feature type="helix" evidence="50">
    <location>
        <begin position="254"/>
        <end position="267"/>
    </location>
</feature>
<feature type="strand" evidence="50">
    <location>
        <begin position="270"/>
        <end position="276"/>
    </location>
</feature>
<feature type="helix" evidence="55">
    <location>
        <begin position="280"/>
        <end position="282"/>
    </location>
</feature>
<feature type="strand" evidence="53">
    <location>
        <begin position="283"/>
        <end position="285"/>
    </location>
</feature>
<feature type="helix" evidence="50">
    <location>
        <begin position="286"/>
        <end position="303"/>
    </location>
</feature>
<gene>
    <name type="primary">Arg1</name>
</gene>
<protein>
    <recommendedName>
        <fullName>Arginase-1</fullName>
        <ecNumber evidence="9 11">3.5.3.1</ecNumber>
    </recommendedName>
    <alternativeName>
        <fullName>Liver-type arginase</fullName>
    </alternativeName>
    <alternativeName>
        <fullName>Type I arginase</fullName>
    </alternativeName>
</protein>